<comment type="function">
    <text evidence="1">Catalyzes the oxidative decarboxylation of 6-phosphogluconate to ribulose 5-phosphate and CO(2), with concomitant reduction of NADP to NADPH.</text>
</comment>
<comment type="catalytic activity">
    <reaction>
        <text>6-phospho-D-gluconate + NADP(+) = D-ribulose 5-phosphate + CO2 + NADPH</text>
        <dbReference type="Rhea" id="RHEA:10116"/>
        <dbReference type="ChEBI" id="CHEBI:16526"/>
        <dbReference type="ChEBI" id="CHEBI:57783"/>
        <dbReference type="ChEBI" id="CHEBI:58121"/>
        <dbReference type="ChEBI" id="CHEBI:58349"/>
        <dbReference type="ChEBI" id="CHEBI:58759"/>
        <dbReference type="EC" id="1.1.1.44"/>
    </reaction>
</comment>
<comment type="pathway">
    <text>Carbohydrate degradation; pentose phosphate pathway; D-ribulose 5-phosphate from D-glucose 6-phosphate (oxidative stage): step 3/3.</text>
</comment>
<comment type="subunit">
    <text evidence="1">Homodimer.</text>
</comment>
<comment type="similarity">
    <text evidence="2">Belongs to the 6-phosphogluconate dehydrogenase family.</text>
</comment>
<gene>
    <name type="primary">DOR14</name>
</gene>
<proteinExistence type="inferred from homology"/>
<name>6PGD_CANAX</name>
<sequence>MKNFNALSRLSILSKQLSFNNTNSSIARGDIGLIGLAVMGQNLILNMADHGYTVVAYNRTTAKVDRFLENEAKGKSILGAHSIKELVDQLKRPRRIMLLVKAGAPVDEFINQLLPYLEEGDIIIDGGNSHFPDSNRRYEELAKKGILFVGSGVSGGEEGARTGPSLMPGGNEKAWPHIKEIFQDVAAKSDGEPCCDWVGDAGAGHYVKMVHNGIEYGDMQLICEAYDLMKRVGKFEDKEIGDVFATWNKGVLDSFLIEITRDILYYNDPTDGKPLVEKILDTAGQKGTGKWTAVNALDLGIPVTLIGEAVFSRCLSAMKAERVEASKALKGPQVTGESPITDKKQFIDDLEQALYASKIISYTQGFMLMNQAAKDYGWKLNNAGIALMWRGGCIIRSVFLAEITAAYRKKPDLENLLLYPFFNDAITKAQSGWRASVGKAIQYGIPTPAFSTALAFYDGLRSERLPANLLQAQRDYFGAHTFKVLPGQENELLKKDEWIHINWTGRGGDVSSTTYDA</sequence>
<protein>
    <recommendedName>
        <fullName>6-phosphogluconate dehydrogenase, decarboxylating</fullName>
        <ecNumber>1.1.1.44</ecNumber>
    </recommendedName>
</protein>
<feature type="chain" id="PRO_0000090072" description="6-phosphogluconate dehydrogenase, decarboxylating">
    <location>
        <begin position="1"/>
        <end position="517"/>
    </location>
</feature>
<feature type="active site" description="Proton acceptor" evidence="1">
    <location>
        <position position="208"/>
    </location>
</feature>
<feature type="active site" description="Proton donor" evidence="1">
    <location>
        <position position="215"/>
    </location>
</feature>
<feature type="binding site" evidence="1">
    <location>
        <begin position="35"/>
        <end position="40"/>
    </location>
    <ligand>
        <name>NADP(+)</name>
        <dbReference type="ChEBI" id="CHEBI:58349"/>
    </ligand>
</feature>
<feature type="binding site" evidence="1">
    <location>
        <begin position="58"/>
        <end position="60"/>
    </location>
    <ligand>
        <name>NADP(+)</name>
        <dbReference type="ChEBI" id="CHEBI:58349"/>
    </ligand>
</feature>
<feature type="binding site" evidence="1">
    <location>
        <begin position="100"/>
        <end position="102"/>
    </location>
    <ligand>
        <name>NADP(+)</name>
        <dbReference type="ChEBI" id="CHEBI:58349"/>
    </ligand>
</feature>
<feature type="binding site" evidence="1">
    <location>
        <position position="128"/>
    </location>
    <ligand>
        <name>NADP(+)</name>
        <dbReference type="ChEBI" id="CHEBI:58349"/>
    </ligand>
</feature>
<feature type="binding site" description="in other chain" evidence="1">
    <location>
        <position position="128"/>
    </location>
    <ligand>
        <name>substrate</name>
        <note>ligand shared between dimeric partners</note>
    </ligand>
</feature>
<feature type="binding site" description="in other chain" evidence="1">
    <location>
        <begin position="154"/>
        <end position="156"/>
    </location>
    <ligand>
        <name>substrate</name>
        <note>ligand shared between dimeric partners</note>
    </ligand>
</feature>
<feature type="binding site" description="in other chain" evidence="1">
    <location>
        <begin position="211"/>
        <end position="212"/>
    </location>
    <ligand>
        <name>substrate</name>
        <note>ligand shared between dimeric partners</note>
    </ligand>
</feature>
<feature type="binding site" description="in other chain" evidence="1">
    <location>
        <position position="216"/>
    </location>
    <ligand>
        <name>substrate</name>
        <note>ligand shared between dimeric partners</note>
    </ligand>
</feature>
<feature type="binding site" description="in other chain" evidence="1">
    <location>
        <position position="286"/>
    </location>
    <ligand>
        <name>substrate</name>
        <note>ligand shared between dimeric partners</note>
    </ligand>
</feature>
<feature type="binding site" description="in other chain" evidence="1">
    <location>
        <position position="313"/>
    </location>
    <ligand>
        <name>substrate</name>
        <note>ligand shared between dimeric partners</note>
    </ligand>
</feature>
<feature type="binding site" evidence="1">
    <location>
        <position position="474"/>
    </location>
    <ligand>
        <name>substrate</name>
        <note>ligand shared between dimeric partners</note>
    </ligand>
</feature>
<feature type="binding site" evidence="1">
    <location>
        <position position="480"/>
    </location>
    <ligand>
        <name>substrate</name>
        <note>ligand shared between dimeric partners</note>
    </ligand>
</feature>
<accession>O13287</accession>
<evidence type="ECO:0000250" key="1"/>
<evidence type="ECO:0000305" key="2"/>
<dbReference type="EC" id="1.1.1.44"/>
<dbReference type="EMBL" id="AB006102">
    <property type="protein sequence ID" value="BAA21690.1"/>
    <property type="molecule type" value="Genomic_DNA"/>
</dbReference>
<dbReference type="SMR" id="O13287"/>
<dbReference type="MoonProt" id="O13287"/>
<dbReference type="VEuPathDB" id="FungiDB:C1_13860C_A"/>
<dbReference type="VEuPathDB" id="FungiDB:CAWG_00066"/>
<dbReference type="UniPathway" id="UPA00115">
    <property type="reaction ID" value="UER00410"/>
</dbReference>
<dbReference type="GO" id="GO:0050661">
    <property type="term" value="F:NADP binding"/>
    <property type="evidence" value="ECO:0007669"/>
    <property type="project" value="EnsemblFungi"/>
</dbReference>
<dbReference type="GO" id="GO:0004616">
    <property type="term" value="F:phosphogluconate dehydrogenase (decarboxylating) activity"/>
    <property type="evidence" value="ECO:0007669"/>
    <property type="project" value="UniProtKB-EC"/>
</dbReference>
<dbReference type="GO" id="GO:0019521">
    <property type="term" value="P:D-gluconate metabolic process"/>
    <property type="evidence" value="ECO:0007669"/>
    <property type="project" value="UniProtKB-KW"/>
</dbReference>
<dbReference type="GO" id="GO:0061688">
    <property type="term" value="P:glycolytic process via Entner-Doudoroff Pathway"/>
    <property type="evidence" value="ECO:0007669"/>
    <property type="project" value="EnsemblFungi"/>
</dbReference>
<dbReference type="GO" id="GO:0009051">
    <property type="term" value="P:pentose-phosphate shunt, oxidative branch"/>
    <property type="evidence" value="ECO:0007669"/>
    <property type="project" value="EnsemblFungi"/>
</dbReference>
<dbReference type="FunFam" id="1.10.1040.10:FF:000002">
    <property type="entry name" value="6-phosphogluconate dehydrogenase, decarboxylating"/>
    <property type="match status" value="1"/>
</dbReference>
<dbReference type="FunFam" id="1.20.5.320:FF:000002">
    <property type="entry name" value="6-phosphogluconate dehydrogenase, decarboxylating"/>
    <property type="match status" value="1"/>
</dbReference>
<dbReference type="FunFam" id="3.40.50.720:FF:000007">
    <property type="entry name" value="6-phosphogluconate dehydrogenase, decarboxylating"/>
    <property type="match status" value="1"/>
</dbReference>
<dbReference type="Gene3D" id="1.20.5.320">
    <property type="entry name" value="6-Phosphogluconate Dehydrogenase, domain 3"/>
    <property type="match status" value="1"/>
</dbReference>
<dbReference type="Gene3D" id="1.10.1040.10">
    <property type="entry name" value="N-(1-d-carboxylethyl)-l-norvaline Dehydrogenase, domain 2"/>
    <property type="match status" value="1"/>
</dbReference>
<dbReference type="Gene3D" id="3.40.50.720">
    <property type="entry name" value="NAD(P)-binding Rossmann-like Domain"/>
    <property type="match status" value="1"/>
</dbReference>
<dbReference type="InterPro" id="IPR008927">
    <property type="entry name" value="6-PGluconate_DH-like_C_sf"/>
</dbReference>
<dbReference type="InterPro" id="IPR013328">
    <property type="entry name" value="6PGD_dom2"/>
</dbReference>
<dbReference type="InterPro" id="IPR006114">
    <property type="entry name" value="6PGDH_C"/>
</dbReference>
<dbReference type="InterPro" id="IPR006113">
    <property type="entry name" value="6PGDH_Gnd/GntZ"/>
</dbReference>
<dbReference type="InterPro" id="IPR006115">
    <property type="entry name" value="6PGDH_NADP-bd"/>
</dbReference>
<dbReference type="InterPro" id="IPR006184">
    <property type="entry name" value="6PGdom_BS"/>
</dbReference>
<dbReference type="InterPro" id="IPR036291">
    <property type="entry name" value="NAD(P)-bd_dom_sf"/>
</dbReference>
<dbReference type="InterPro" id="IPR006183">
    <property type="entry name" value="Pgluconate_DH"/>
</dbReference>
<dbReference type="NCBIfam" id="TIGR00873">
    <property type="entry name" value="gnd"/>
    <property type="match status" value="1"/>
</dbReference>
<dbReference type="NCBIfam" id="NF006765">
    <property type="entry name" value="PRK09287.1"/>
    <property type="match status" value="1"/>
</dbReference>
<dbReference type="PANTHER" id="PTHR11811">
    <property type="entry name" value="6-PHOSPHOGLUCONATE DEHYDROGENASE"/>
    <property type="match status" value="1"/>
</dbReference>
<dbReference type="Pfam" id="PF00393">
    <property type="entry name" value="6PGD"/>
    <property type="match status" value="1"/>
</dbReference>
<dbReference type="Pfam" id="PF03446">
    <property type="entry name" value="NAD_binding_2"/>
    <property type="match status" value="1"/>
</dbReference>
<dbReference type="PIRSF" id="PIRSF000109">
    <property type="entry name" value="6PGD"/>
    <property type="match status" value="1"/>
</dbReference>
<dbReference type="PRINTS" id="PR00076">
    <property type="entry name" value="6PGDHDRGNASE"/>
</dbReference>
<dbReference type="SMART" id="SM01350">
    <property type="entry name" value="6PGD"/>
    <property type="match status" value="1"/>
</dbReference>
<dbReference type="SUPFAM" id="SSF48179">
    <property type="entry name" value="6-phosphogluconate dehydrogenase C-terminal domain-like"/>
    <property type="match status" value="1"/>
</dbReference>
<dbReference type="SUPFAM" id="SSF51735">
    <property type="entry name" value="NAD(P)-binding Rossmann-fold domains"/>
    <property type="match status" value="1"/>
</dbReference>
<dbReference type="PROSITE" id="PS00461">
    <property type="entry name" value="6PGD"/>
    <property type="match status" value="1"/>
</dbReference>
<reference key="1">
    <citation type="submission" date="1997-07" db="EMBL/GenBank/DDBJ databases">
        <title>Molecular cloning of DOR14 gene for 6-phosphogluconate dehydrogenase (6PGD) from Candida albicans.</title>
        <authorList>
            <person name="Watanabe M."/>
            <person name="Ishii N."/>
            <person name="Arisawa M."/>
            <person name="Aoki Y."/>
        </authorList>
    </citation>
    <scope>NUCLEOTIDE SEQUENCE [GENOMIC DNA]</scope>
    <source>
        <strain>ATCC 10259 / CBS 5796 / DSM 5817 / JCM 2078 / NBRC 1060 / 2024</strain>
    </source>
</reference>
<keyword id="KW-0311">Gluconate utilization</keyword>
<keyword id="KW-0521">NADP</keyword>
<keyword id="KW-0560">Oxidoreductase</keyword>
<keyword id="KW-0570">Pentose shunt</keyword>
<organism>
    <name type="scientific">Candida albicans</name>
    <name type="common">Yeast</name>
    <dbReference type="NCBI Taxonomy" id="5476"/>
    <lineage>
        <taxon>Eukaryota</taxon>
        <taxon>Fungi</taxon>
        <taxon>Dikarya</taxon>
        <taxon>Ascomycota</taxon>
        <taxon>Saccharomycotina</taxon>
        <taxon>Pichiomycetes</taxon>
        <taxon>Debaryomycetaceae</taxon>
        <taxon>Candida/Lodderomyces clade</taxon>
        <taxon>Candida</taxon>
    </lineage>
</organism>